<gene>
    <name evidence="8" type="primary">shyC</name>
    <name type="ordered locus">PF1330</name>
</gene>
<reference evidence="7 8" key="1">
    <citation type="journal article" date="2000" name="J. Bacteriol.">
        <title>Characterization of hydrogenase II from the hyperthermophilic archaeon Pyrococcus furiosus and assessment of its role in sulfur reduction.</title>
        <authorList>
            <person name="Ma K."/>
            <person name="Weiss R."/>
            <person name="Adams M.W."/>
        </authorList>
    </citation>
    <scope>NUCLEOTIDE SEQUENCE [GENOMIC DNA]</scope>
    <scope>PROTEIN SEQUENCE OF 1-12</scope>
    <scope>FUNCTION</scope>
    <scope>CATALYTIC ACTIVITY</scope>
    <scope>COFACTOR</scope>
    <scope>BIOPHYSICOCHEMICAL PROPERTIES</scope>
    <scope>SUBCELLULAR LOCATION</scope>
    <scope>SUBUNIT</scope>
    <scope>EPR SPECTROSCOPY</scope>
    <source>
        <strain evidence="8">ATCC 43587 / DSM 3638 / JCM 8422 / Vc1</strain>
    </source>
</reference>
<reference evidence="9" key="2">
    <citation type="journal article" date="1999" name="Genetics">
        <title>Divergence of the hyperthermophilic archaea Pyrococcus furiosus and P. horikoshii inferred from complete genomic sequences.</title>
        <authorList>
            <person name="Maeder D.L."/>
            <person name="Weiss R.B."/>
            <person name="Dunn D.M."/>
            <person name="Cherry J.L."/>
            <person name="Gonzalez J.M."/>
            <person name="DiRuggiero J."/>
            <person name="Robb F.T."/>
        </authorList>
    </citation>
    <scope>NUCLEOTIDE SEQUENCE [LARGE SCALE GENOMIC DNA]</scope>
    <source>
        <strain>ATCC 43587 / DSM 3638 / JCM 8422 / Vc1</strain>
    </source>
</reference>
<reference evidence="7" key="3">
    <citation type="journal article" date="2001" name="J. Bacteriol.">
        <title>Key role for sulfur in peptide metabolism and in regulation of three hydrogenases in the hyperthermophilic archaeon Pyrococcus furiosus.</title>
        <authorList>
            <person name="Adams M.W."/>
            <person name="Holden J.F."/>
            <person name="Menon A.L."/>
            <person name="Schut G.J."/>
            <person name="Grunden A.M."/>
            <person name="Hou C."/>
            <person name="Hutchins A.M."/>
            <person name="Jenney F.E. Jr."/>
            <person name="Kim C."/>
            <person name="Ma K."/>
            <person name="Pan G."/>
            <person name="Roy R."/>
            <person name="Sapra R."/>
            <person name="Story S.V."/>
            <person name="Verhagen M.F."/>
        </authorList>
    </citation>
    <scope>FUNCTION</scope>
    <source>
        <strain evidence="4">ATCC 43587 / DSM 3638 / JCM 8422 / Vc1</strain>
    </source>
</reference>
<reference evidence="7" key="4">
    <citation type="journal article" date="2001" name="Methods Enzymol.">
        <title>Hydrogenases I and II from Pyrococcus furiosus.</title>
        <authorList>
            <person name="Ma K."/>
            <person name="Adams M.W."/>
        </authorList>
    </citation>
    <scope>FUNCTION</scope>
    <scope>CATALYTIC ACTIVITY</scope>
    <scope>SUBUNIT</scope>
    <source>
        <strain evidence="5">ATCC 43587 / DSM 3638 / JCM 8422 / Vc1</strain>
    </source>
</reference>
<evidence type="ECO:0000250" key="1">
    <source>
        <dbReference type="UniProtKB" id="P56968"/>
    </source>
</evidence>
<evidence type="ECO:0000255" key="2">
    <source>
        <dbReference type="PROSITE-ProRule" id="PRU00716"/>
    </source>
</evidence>
<evidence type="ECO:0000269" key="3">
    <source>
    </source>
</evidence>
<evidence type="ECO:0000269" key="4">
    <source>
    </source>
</evidence>
<evidence type="ECO:0000269" key="5">
    <source>
    </source>
</evidence>
<evidence type="ECO:0000303" key="6">
    <source>
    </source>
</evidence>
<evidence type="ECO:0000305" key="7"/>
<evidence type="ECO:0000312" key="8">
    <source>
        <dbReference type="EMBL" id="AAF61852.1"/>
    </source>
</evidence>
<evidence type="ECO:0000312" key="9">
    <source>
        <dbReference type="EMBL" id="AAL81454.1"/>
    </source>
</evidence>
<comment type="function">
    <text evidence="3 4 5">Part of a bifunctional enzyme complex that functions as a hydrogen-evolving hydrogenase with sulfur-reducing activity. May play a role in hydrogen cycling during fermentative growth. Activity exhibited with NAD in addition to NADPH. The beta and gamma subunits form the sulfur-reducing component that catalyzes the cytoplasmic production of hydrogen sulfide in the presence of elemental sulfur.</text>
</comment>
<comment type="catalytic activity">
    <reaction evidence="3 5">
        <text>n sulfur + H2 = (n-1) sulfur + hydrogen sulfide + H(+)</text>
        <dbReference type="Rhea" id="RHEA:35591"/>
        <dbReference type="ChEBI" id="CHEBI:15378"/>
        <dbReference type="ChEBI" id="CHEBI:18276"/>
        <dbReference type="ChEBI" id="CHEBI:26833"/>
        <dbReference type="ChEBI" id="CHEBI:29919"/>
        <dbReference type="EC" id="1.12.98.4"/>
    </reaction>
</comment>
<comment type="cofactor">
    <cofactor evidence="3">
        <name>FAD</name>
        <dbReference type="ChEBI" id="CHEBI:57692"/>
    </cofactor>
    <text evidence="3">Binds 1 FAD per subunit.</text>
</comment>
<comment type="cofactor">
    <cofactor evidence="3">
        <name>[2Fe-2S] cluster</name>
        <dbReference type="ChEBI" id="CHEBI:190135"/>
    </cofactor>
    <text evidence="3">Binds 1 [2Fe-2S] cluster.</text>
</comment>
<comment type="biophysicochemical properties">
    <kinetics>
        <KM evidence="3">0.2 mM for sulfur (H(2) as cosubstrate)</KM>
        <KM evidence="3">0.67 mM for polysulfide (NADPH as cosubstrate)</KM>
        <text evidence="3">Measured for the whole complex.</text>
    </kinetics>
    <temperatureDependence>
        <text evidence="3">Optimum temperature is greater than 90 degrees Celsius. Activity increases with increasing temperature from 30 degrees Celsius to 90 degrees Celsius. Has a half-life of 6 hours at 95 degrees Celsius.</text>
    </temperatureDependence>
</comment>
<comment type="subunit">
    <text evidence="3 5">Dimer of heterotetramer of alpha, beta, gamma and delta subunits. The nickel-containing alpha and delta subunits constitute the hydrogenase activity. The beta and gamma subunits (flavin-containing dimer) constitute the sulfur reductase activity.</text>
</comment>
<comment type="subcellular location">
    <subcellularLocation>
        <location evidence="3">Cytoplasm</location>
    </subcellularLocation>
</comment>
<organism>
    <name type="scientific">Pyrococcus furiosus (strain ATCC 43587 / DSM 3638 / JCM 8422 / Vc1)</name>
    <dbReference type="NCBI Taxonomy" id="186497"/>
    <lineage>
        <taxon>Archaea</taxon>
        <taxon>Methanobacteriati</taxon>
        <taxon>Methanobacteriota</taxon>
        <taxon>Thermococci</taxon>
        <taxon>Thermococcales</taxon>
        <taxon>Thermococcaceae</taxon>
        <taxon>Pyrococcus</taxon>
    </lineage>
</organism>
<dbReference type="EC" id="1.12.98.4"/>
<dbReference type="EMBL" id="AF176650">
    <property type="protein sequence ID" value="AAF61852.1"/>
    <property type="molecule type" value="Genomic_DNA"/>
</dbReference>
<dbReference type="EMBL" id="AE009950">
    <property type="protein sequence ID" value="AAL81454.1"/>
    <property type="molecule type" value="Genomic_DNA"/>
</dbReference>
<dbReference type="RefSeq" id="WP_011012476.1">
    <property type="nucleotide sequence ID" value="NZ_CP023154.1"/>
</dbReference>
<dbReference type="SMR" id="E7FHW8"/>
<dbReference type="STRING" id="186497.PF1330"/>
<dbReference type="PaxDb" id="186497-PF1330"/>
<dbReference type="GeneID" id="41713133"/>
<dbReference type="KEGG" id="pfu:PF1330"/>
<dbReference type="PATRIC" id="fig|186497.12.peg.1393"/>
<dbReference type="eggNOG" id="arCOG02199">
    <property type="taxonomic scope" value="Archaea"/>
</dbReference>
<dbReference type="HOGENOM" id="CLU_003827_1_1_2"/>
<dbReference type="OrthoDB" id="35401at2157"/>
<dbReference type="PhylomeDB" id="E7FHW8"/>
<dbReference type="BioCyc" id="MetaCyc:MONOMER-17851"/>
<dbReference type="BRENDA" id="1.12.1.5">
    <property type="organism ID" value="5243"/>
</dbReference>
<dbReference type="BRENDA" id="1.12.98.4">
    <property type="organism ID" value="5243"/>
</dbReference>
<dbReference type="Proteomes" id="UP000001013">
    <property type="component" value="Chromosome"/>
</dbReference>
<dbReference type="GO" id="GO:0005737">
    <property type="term" value="C:cytoplasm"/>
    <property type="evidence" value="ECO:0007669"/>
    <property type="project" value="UniProtKB-SubCell"/>
</dbReference>
<dbReference type="GO" id="GO:0051537">
    <property type="term" value="F:2 iron, 2 sulfur cluster binding"/>
    <property type="evidence" value="ECO:0007669"/>
    <property type="project" value="UniProtKB-KW"/>
</dbReference>
<dbReference type="GO" id="GO:0050660">
    <property type="term" value="F:flavin adenine dinucleotide binding"/>
    <property type="evidence" value="ECO:0007669"/>
    <property type="project" value="InterPro"/>
</dbReference>
<dbReference type="GO" id="GO:0046872">
    <property type="term" value="F:metal ion binding"/>
    <property type="evidence" value="ECO:0007669"/>
    <property type="project" value="UniProtKB-KW"/>
</dbReference>
<dbReference type="GO" id="GO:0033796">
    <property type="term" value="F:sulfur reductase activity"/>
    <property type="evidence" value="ECO:0007669"/>
    <property type="project" value="UniProtKB-EC"/>
</dbReference>
<dbReference type="GO" id="GO:0006221">
    <property type="term" value="P:pyrimidine nucleotide biosynthetic process"/>
    <property type="evidence" value="ECO:0007669"/>
    <property type="project" value="InterPro"/>
</dbReference>
<dbReference type="CDD" id="cd06221">
    <property type="entry name" value="sulfite_reductase_like"/>
    <property type="match status" value="1"/>
</dbReference>
<dbReference type="Gene3D" id="2.10.240.10">
    <property type="entry name" value="Dihydroorotate dehydrogenase, electron transfer subunit"/>
    <property type="match status" value="1"/>
</dbReference>
<dbReference type="Gene3D" id="3.40.50.80">
    <property type="entry name" value="Nucleotide-binding domain of ferredoxin-NADP reductase (FNR) module"/>
    <property type="match status" value="1"/>
</dbReference>
<dbReference type="Gene3D" id="2.40.30.10">
    <property type="entry name" value="Translation factors"/>
    <property type="match status" value="1"/>
</dbReference>
<dbReference type="InterPro" id="IPR008333">
    <property type="entry name" value="Cbr1-like_FAD-bd_dom"/>
</dbReference>
<dbReference type="InterPro" id="IPR012165">
    <property type="entry name" value="Cyt_c3_hydrogenase_gsu"/>
</dbReference>
<dbReference type="InterPro" id="IPR037117">
    <property type="entry name" value="Dihydroorotate_DH_ele_sf"/>
</dbReference>
<dbReference type="InterPro" id="IPR019480">
    <property type="entry name" value="Dihydroorotate_DH_Fe-S-bd"/>
</dbReference>
<dbReference type="InterPro" id="IPR017927">
    <property type="entry name" value="FAD-bd_FR_type"/>
</dbReference>
<dbReference type="InterPro" id="IPR001709">
    <property type="entry name" value="Flavoprot_Pyr_Nucl_cyt_Rdtase"/>
</dbReference>
<dbReference type="InterPro" id="IPR039261">
    <property type="entry name" value="FNR_nucleotide-bd"/>
</dbReference>
<dbReference type="InterPro" id="IPR001433">
    <property type="entry name" value="OxRdtase_FAD/NAD-bd"/>
</dbReference>
<dbReference type="InterPro" id="IPR050353">
    <property type="entry name" value="PyrK_electron_transfer"/>
</dbReference>
<dbReference type="InterPro" id="IPR017938">
    <property type="entry name" value="Riboflavin_synthase-like_b-brl"/>
</dbReference>
<dbReference type="InterPro" id="IPR053639">
    <property type="entry name" value="Sulfhydrogenase_gamma-like"/>
</dbReference>
<dbReference type="NCBIfam" id="NF006220">
    <property type="entry name" value="PRK08345.1"/>
    <property type="match status" value="1"/>
</dbReference>
<dbReference type="NCBIfam" id="NF040830">
    <property type="entry name" value="sulfhyd_ShyC"/>
    <property type="match status" value="1"/>
</dbReference>
<dbReference type="PANTHER" id="PTHR43513:SF1">
    <property type="entry name" value="ANAEROBIC SULFITE REDUCTASE SUBUNIT B"/>
    <property type="match status" value="1"/>
</dbReference>
<dbReference type="PANTHER" id="PTHR43513">
    <property type="entry name" value="DIHYDROOROTATE DEHYDROGENASE B (NAD(+)), ELECTRON TRANSFER SUBUNIT"/>
    <property type="match status" value="1"/>
</dbReference>
<dbReference type="Pfam" id="PF10418">
    <property type="entry name" value="DHODB_Fe-S_bind"/>
    <property type="match status" value="1"/>
</dbReference>
<dbReference type="Pfam" id="PF00970">
    <property type="entry name" value="FAD_binding_6"/>
    <property type="match status" value="1"/>
</dbReference>
<dbReference type="Pfam" id="PF00175">
    <property type="entry name" value="NAD_binding_1"/>
    <property type="match status" value="1"/>
</dbReference>
<dbReference type="PIRSF" id="PIRSF006816">
    <property type="entry name" value="Cyc3_hyd_g"/>
    <property type="match status" value="1"/>
</dbReference>
<dbReference type="PRINTS" id="PR00371">
    <property type="entry name" value="FPNCR"/>
</dbReference>
<dbReference type="PRINTS" id="PR00410">
    <property type="entry name" value="PHEHYDRXLASE"/>
</dbReference>
<dbReference type="SUPFAM" id="SSF52343">
    <property type="entry name" value="Ferredoxin reductase-like, C-terminal NADP-linked domain"/>
    <property type="match status" value="1"/>
</dbReference>
<dbReference type="SUPFAM" id="SSF63380">
    <property type="entry name" value="Riboflavin synthase domain-like"/>
    <property type="match status" value="1"/>
</dbReference>
<dbReference type="PROSITE" id="PS51384">
    <property type="entry name" value="FAD_FR"/>
    <property type="match status" value="1"/>
</dbReference>
<sequence length="288" mass="32945">MNPYRSYDARIIEVKELTSREKLFSLKFLDNEIEENFTFKPGQFVIVDIRGFGEFPISLCSSPTRRPIQLCIRRVGRMTKFIHKMNEGDIIGIRGPYGNGFPMDLMEGSNLILIAGGLGMAPLRSVLWYAIDSGKYEKIYLFYGTKSYEDILFRDEIIHLLKHGEKLNCHVKLAYEVETPSCIYLERGFSEKVCKGVVTDLFRGEEFDVENSYALICGPPVMYKYVIRELLDRGLSPGRIYMTLERRMRCGVGKCGHCIVGTSVSIKYICKDGPVFTYWDALSTRGLI</sequence>
<feature type="chain" id="PRO_0000420729" description="Sulfhydrogenase 2 subunit gamma">
    <location>
        <begin position="1"/>
        <end position="288"/>
    </location>
</feature>
<feature type="domain" description="FAD-binding FR-type" evidence="2">
    <location>
        <begin position="4"/>
        <end position="103"/>
    </location>
</feature>
<feature type="binding site" evidence="1">
    <location>
        <position position="250"/>
    </location>
    <ligand>
        <name>[2Fe-2S] cluster</name>
        <dbReference type="ChEBI" id="CHEBI:190135"/>
    </ligand>
</feature>
<feature type="binding site" evidence="1">
    <location>
        <position position="255"/>
    </location>
    <ligand>
        <name>[2Fe-2S] cluster</name>
        <dbReference type="ChEBI" id="CHEBI:190135"/>
    </ligand>
</feature>
<feature type="binding site" evidence="1">
    <location>
        <position position="258"/>
    </location>
    <ligand>
        <name>[2Fe-2S] cluster</name>
        <dbReference type="ChEBI" id="CHEBI:190135"/>
    </ligand>
</feature>
<feature type="binding site" evidence="1">
    <location>
        <position position="270"/>
    </location>
    <ligand>
        <name>[2Fe-2S] cluster</name>
        <dbReference type="ChEBI" id="CHEBI:190135"/>
    </ligand>
</feature>
<proteinExistence type="evidence at protein level"/>
<protein>
    <recommendedName>
        <fullName>Sulfhydrogenase 2 subunit gamma</fullName>
        <ecNumber>1.12.98.4</ecNumber>
    </recommendedName>
    <alternativeName>
        <fullName evidence="6">Hydrogenase-II subunit gamma</fullName>
        <shortName evidence="6">H-II gamma</shortName>
    </alternativeName>
    <alternativeName>
        <fullName evidence="6">Sulfhydrogenase II subunit gamma</fullName>
    </alternativeName>
    <alternativeName>
        <fullName evidence="6">Sulfur reductase subunit ShyC</fullName>
    </alternativeName>
</protein>
<accession>E7FHW8</accession>
<accession>Q7LWY8</accession>
<accession>Q9P9M6</accession>
<name>HYD2G_PYRFU</name>
<keyword id="KW-0001">2Fe-2S</keyword>
<keyword id="KW-0963">Cytoplasm</keyword>
<keyword id="KW-0903">Direct protein sequencing</keyword>
<keyword id="KW-0249">Electron transport</keyword>
<keyword id="KW-0274">FAD</keyword>
<keyword id="KW-0285">Flavoprotein</keyword>
<keyword id="KW-0408">Iron</keyword>
<keyword id="KW-0411">Iron-sulfur</keyword>
<keyword id="KW-0479">Metal-binding</keyword>
<keyword id="KW-0560">Oxidoreductase</keyword>
<keyword id="KW-1185">Reference proteome</keyword>
<keyword id="KW-0813">Transport</keyword>